<proteinExistence type="inferred from homology"/>
<dbReference type="EMBL" id="OP596311">
    <property type="protein sequence ID" value="UZP48222.1"/>
    <property type="molecule type" value="Genomic_DNA"/>
</dbReference>
<dbReference type="SMR" id="P9WEL1"/>
<dbReference type="GO" id="GO:0016020">
    <property type="term" value="C:membrane"/>
    <property type="evidence" value="ECO:0007669"/>
    <property type="project" value="UniProtKB-SubCell"/>
</dbReference>
<dbReference type="GO" id="GO:0022857">
    <property type="term" value="F:transmembrane transporter activity"/>
    <property type="evidence" value="ECO:0007669"/>
    <property type="project" value="InterPro"/>
</dbReference>
<dbReference type="Gene3D" id="1.20.1250.20">
    <property type="entry name" value="MFS general substrate transporter like domains"/>
    <property type="match status" value="1"/>
</dbReference>
<dbReference type="InterPro" id="IPR011701">
    <property type="entry name" value="MFS"/>
</dbReference>
<dbReference type="InterPro" id="IPR036259">
    <property type="entry name" value="MFS_trans_sf"/>
</dbReference>
<dbReference type="InterPro" id="IPR005829">
    <property type="entry name" value="Sugar_transporter_CS"/>
</dbReference>
<dbReference type="PANTHER" id="PTHR23507:SF40">
    <property type="entry name" value="TETRACYCLINE-EFFLUX TRANSPORTER"/>
    <property type="match status" value="1"/>
</dbReference>
<dbReference type="PANTHER" id="PTHR23507">
    <property type="entry name" value="ZGC:174356"/>
    <property type="match status" value="1"/>
</dbReference>
<dbReference type="Pfam" id="PF07690">
    <property type="entry name" value="MFS_1"/>
    <property type="match status" value="1"/>
</dbReference>
<dbReference type="SUPFAM" id="SSF103473">
    <property type="entry name" value="MFS general substrate transporter"/>
    <property type="match status" value="1"/>
</dbReference>
<dbReference type="PROSITE" id="PS00216">
    <property type="entry name" value="SUGAR_TRANSPORT_1"/>
    <property type="match status" value="1"/>
</dbReference>
<protein>
    <recommendedName>
        <fullName evidence="5">MFS-type transporter avaJ</fullName>
    </recommendedName>
    <alternativeName>
        <fullName evidence="5">Ava biosynthesis cluster protein J</fullName>
    </alternativeName>
</protein>
<name>AVAJ_ASPVE</name>
<accession>P9WEL1</accession>
<evidence type="ECO:0000255" key="1"/>
<evidence type="ECO:0000255" key="2">
    <source>
        <dbReference type="PROSITE-ProRule" id="PRU00498"/>
    </source>
</evidence>
<evidence type="ECO:0000256" key="3">
    <source>
        <dbReference type="SAM" id="MobiDB-lite"/>
    </source>
</evidence>
<evidence type="ECO:0000269" key="4">
    <source>
    </source>
</evidence>
<evidence type="ECO:0000303" key="5">
    <source>
    </source>
</evidence>
<evidence type="ECO:0000305" key="6"/>
<evidence type="ECO:0000305" key="7">
    <source>
    </source>
</evidence>
<gene>
    <name evidence="5" type="primary">avaJ</name>
</gene>
<reference key="1">
    <citation type="journal article" date="2023" name="Nat. Chem. Biol.">
        <title>Genome mining for unknown-unknown natural products.</title>
        <authorList>
            <person name="Yee D.A."/>
            <person name="Niwa K."/>
            <person name="Perlatti B."/>
            <person name="Chen M."/>
            <person name="Li Y."/>
            <person name="Tang Y."/>
        </authorList>
    </citation>
    <scope>NUCLEOTIDE SEQUENCE [GENOMIC DNA]</scope>
    <scope>FUNCTION</scope>
    <source>
        <strain>dI-29</strain>
    </source>
</reference>
<keyword id="KW-0325">Glycoprotein</keyword>
<keyword id="KW-0472">Membrane</keyword>
<keyword id="KW-0812">Transmembrane</keyword>
<keyword id="KW-1133">Transmembrane helix</keyword>
<keyword id="KW-0813">Transport</keyword>
<comment type="function">
    <text evidence="4">MFS-type transporter; part of the cluster that mediates the biosynthesis of a highly modified cyclo-arginine-tryptophan dipeptide (cRW).</text>
</comment>
<comment type="pathway">
    <text evidence="7">Secondary metabolite biosynthesis.</text>
</comment>
<comment type="subcellular location">
    <subcellularLocation>
        <location evidence="1">Membrane</location>
        <topology evidence="1">Multi-pass membrane protein</topology>
    </subcellularLocation>
</comment>
<comment type="similarity">
    <text evidence="6">Belongs to the major facilitator superfamily. TCR/Tet family.</text>
</comment>
<sequence>MTSPEHSEDERQPLLTKPSGPDESQSGFGSSWIQFRKPSAMWLLPMYTLYAITAGSLIIPEFNATLGLICHQRHSPDNSDFQLALERCDGNTQVQSDLSQFYIYGTVLSGILGAIAGPNLMGFSDKIGRKPILLISVLGPLIADIIVLAALHYPDEVDVKWLLVGYAMDGLSGSIITATTASQAYISDISAPEDRVSSFSYIQAAFTSAFALGPLIAGGLLSVFDSLIQAYWLAFTIHLSLIVLFTLALPESLKSTAESRGTEENTTNQPKAEAEAGFFEVISSARGLIPSDRSSKTNMYIVAVTEAALFGVSMGLVPLQLAYSAYMFHWRSSAQSAFLTGVNLWSILVLVAVVPLFMSRIQRRQQAEGQSEGQPQTAFGPGELGTIRTCLLLQVAGYITIAVVHSPLGVIAGSLIAGSGAPLSPTLTSCLTKMVPEERQGVLLGAVSFLHAISRILLPSGMNYVYGSTVGTQPYALFALLGFGSGIFLVASMFIGNKSTLPDIPRFPYLMNYSSRS</sequence>
<organism>
    <name type="scientific">Aspergillus versicolor</name>
    <dbReference type="NCBI Taxonomy" id="46472"/>
    <lineage>
        <taxon>Eukaryota</taxon>
        <taxon>Fungi</taxon>
        <taxon>Dikarya</taxon>
        <taxon>Ascomycota</taxon>
        <taxon>Pezizomycotina</taxon>
        <taxon>Eurotiomycetes</taxon>
        <taxon>Eurotiomycetidae</taxon>
        <taxon>Eurotiales</taxon>
        <taxon>Aspergillaceae</taxon>
        <taxon>Aspergillus</taxon>
        <taxon>Aspergillus subgen. Nidulantes</taxon>
    </lineage>
</organism>
<feature type="chain" id="PRO_0000461018" description="MFS-type transporter avaJ">
    <location>
        <begin position="1"/>
        <end position="517"/>
    </location>
</feature>
<feature type="transmembrane region" description="Helical" evidence="1">
    <location>
        <begin position="40"/>
        <end position="60"/>
    </location>
</feature>
<feature type="transmembrane region" description="Helical" evidence="1">
    <location>
        <begin position="103"/>
        <end position="123"/>
    </location>
</feature>
<feature type="transmembrane region" description="Helical" evidence="1">
    <location>
        <begin position="131"/>
        <end position="151"/>
    </location>
</feature>
<feature type="transmembrane region" description="Helical" evidence="1">
    <location>
        <begin position="161"/>
        <end position="181"/>
    </location>
</feature>
<feature type="transmembrane region" description="Helical" evidence="1">
    <location>
        <begin position="204"/>
        <end position="224"/>
    </location>
</feature>
<feature type="transmembrane region" description="Helical" evidence="1">
    <location>
        <begin position="230"/>
        <end position="250"/>
    </location>
</feature>
<feature type="transmembrane region" description="Helical" evidence="1">
    <location>
        <begin position="299"/>
        <end position="319"/>
    </location>
</feature>
<feature type="transmembrane region" description="Helical" evidence="1">
    <location>
        <begin position="338"/>
        <end position="358"/>
    </location>
</feature>
<feature type="transmembrane region" description="Helical" evidence="1">
    <location>
        <begin position="391"/>
        <end position="411"/>
    </location>
</feature>
<feature type="transmembrane region" description="Helical" evidence="1">
    <location>
        <begin position="442"/>
        <end position="462"/>
    </location>
</feature>
<feature type="transmembrane region" description="Helical" evidence="1">
    <location>
        <begin position="476"/>
        <end position="496"/>
    </location>
</feature>
<feature type="region of interest" description="Disordered" evidence="3">
    <location>
        <begin position="1"/>
        <end position="28"/>
    </location>
</feature>
<feature type="compositionally biased region" description="Basic and acidic residues" evidence="3">
    <location>
        <begin position="1"/>
        <end position="12"/>
    </location>
</feature>
<feature type="glycosylation site" description="N-linked (GlcNAc...) asparagine" evidence="2">
    <location>
        <position position="63"/>
    </location>
</feature>
<feature type="glycosylation site" description="N-linked (GlcNAc...) asparagine" evidence="2">
    <location>
        <position position="265"/>
    </location>
</feature>
<feature type="glycosylation site" description="N-linked (GlcNAc...) asparagine" evidence="2">
    <location>
        <position position="497"/>
    </location>
</feature>
<feature type="glycosylation site" description="N-linked (GlcNAc...) asparagine" evidence="2">
    <location>
        <position position="512"/>
    </location>
</feature>